<protein>
    <recommendedName>
        <fullName evidence="1">Small ribosomal subunit protein uS14</fullName>
    </recommendedName>
    <alternativeName>
        <fullName evidence="2">30S ribosomal protein S14 type Z</fullName>
    </alternativeName>
</protein>
<evidence type="ECO:0000255" key="1">
    <source>
        <dbReference type="HAMAP-Rule" id="MF_01364"/>
    </source>
</evidence>
<evidence type="ECO:0000305" key="2"/>
<keyword id="KW-0479">Metal-binding</keyword>
<keyword id="KW-0687">Ribonucleoprotein</keyword>
<keyword id="KW-0689">Ribosomal protein</keyword>
<keyword id="KW-0694">RNA-binding</keyword>
<keyword id="KW-0699">rRNA-binding</keyword>
<keyword id="KW-0862">Zinc</keyword>
<dbReference type="EMBL" id="CP000384">
    <property type="protein sequence ID" value="ABG07142.1"/>
    <property type="molecule type" value="Genomic_DNA"/>
</dbReference>
<dbReference type="SMR" id="Q1BD92"/>
<dbReference type="KEGG" id="mmc:Mmcs_1028"/>
<dbReference type="HOGENOM" id="CLU_139869_3_0_11"/>
<dbReference type="BioCyc" id="MSP164756:G1G6O-1052-MONOMER"/>
<dbReference type="GO" id="GO:0005737">
    <property type="term" value="C:cytoplasm"/>
    <property type="evidence" value="ECO:0007669"/>
    <property type="project" value="UniProtKB-ARBA"/>
</dbReference>
<dbReference type="GO" id="GO:0015935">
    <property type="term" value="C:small ribosomal subunit"/>
    <property type="evidence" value="ECO:0007669"/>
    <property type="project" value="TreeGrafter"/>
</dbReference>
<dbReference type="GO" id="GO:0019843">
    <property type="term" value="F:rRNA binding"/>
    <property type="evidence" value="ECO:0007669"/>
    <property type="project" value="UniProtKB-UniRule"/>
</dbReference>
<dbReference type="GO" id="GO:0003735">
    <property type="term" value="F:structural constituent of ribosome"/>
    <property type="evidence" value="ECO:0007669"/>
    <property type="project" value="InterPro"/>
</dbReference>
<dbReference type="GO" id="GO:0008270">
    <property type="term" value="F:zinc ion binding"/>
    <property type="evidence" value="ECO:0007669"/>
    <property type="project" value="UniProtKB-UniRule"/>
</dbReference>
<dbReference type="GO" id="GO:0006412">
    <property type="term" value="P:translation"/>
    <property type="evidence" value="ECO:0007669"/>
    <property type="project" value="UniProtKB-UniRule"/>
</dbReference>
<dbReference type="FunFam" id="4.10.830.10:FF:000001">
    <property type="entry name" value="30S ribosomal protein S14 type Z"/>
    <property type="match status" value="1"/>
</dbReference>
<dbReference type="Gene3D" id="4.10.830.10">
    <property type="entry name" value="30s Ribosomal Protein S14, Chain N"/>
    <property type="match status" value="1"/>
</dbReference>
<dbReference type="HAMAP" id="MF_01364_B">
    <property type="entry name" value="Ribosomal_uS14_2_B"/>
    <property type="match status" value="1"/>
</dbReference>
<dbReference type="InterPro" id="IPR001209">
    <property type="entry name" value="Ribosomal_uS14"/>
</dbReference>
<dbReference type="InterPro" id="IPR023053">
    <property type="entry name" value="Ribosomal_uS14_bact"/>
</dbReference>
<dbReference type="InterPro" id="IPR018271">
    <property type="entry name" value="Ribosomal_uS14_CS"/>
</dbReference>
<dbReference type="InterPro" id="IPR043140">
    <property type="entry name" value="Ribosomal_uS14_sf"/>
</dbReference>
<dbReference type="NCBIfam" id="NF005974">
    <property type="entry name" value="PRK08061.1"/>
    <property type="match status" value="1"/>
</dbReference>
<dbReference type="PANTHER" id="PTHR19836">
    <property type="entry name" value="30S RIBOSOMAL PROTEIN S14"/>
    <property type="match status" value="1"/>
</dbReference>
<dbReference type="PANTHER" id="PTHR19836:SF19">
    <property type="entry name" value="SMALL RIBOSOMAL SUBUNIT PROTEIN US14M"/>
    <property type="match status" value="1"/>
</dbReference>
<dbReference type="Pfam" id="PF00253">
    <property type="entry name" value="Ribosomal_S14"/>
    <property type="match status" value="1"/>
</dbReference>
<dbReference type="SUPFAM" id="SSF57716">
    <property type="entry name" value="Glucocorticoid receptor-like (DNA-binding domain)"/>
    <property type="match status" value="1"/>
</dbReference>
<dbReference type="PROSITE" id="PS00527">
    <property type="entry name" value="RIBOSOMAL_S14"/>
    <property type="match status" value="1"/>
</dbReference>
<organism>
    <name type="scientific">Mycobacterium sp. (strain MCS)</name>
    <dbReference type="NCBI Taxonomy" id="164756"/>
    <lineage>
        <taxon>Bacteria</taxon>
        <taxon>Bacillati</taxon>
        <taxon>Actinomycetota</taxon>
        <taxon>Actinomycetes</taxon>
        <taxon>Mycobacteriales</taxon>
        <taxon>Mycobacteriaceae</taxon>
        <taxon>Mycobacterium</taxon>
    </lineage>
</organism>
<comment type="function">
    <text evidence="1">Binds 16S rRNA, required for the assembly of 30S particles and may also be responsible for determining the conformation of the 16S rRNA at the A site.</text>
</comment>
<comment type="cofactor">
    <cofactor evidence="1">
        <name>Zn(2+)</name>
        <dbReference type="ChEBI" id="CHEBI:29105"/>
    </cofactor>
    <text evidence="1">Binds 1 zinc ion per subunit.</text>
</comment>
<comment type="subunit">
    <text evidence="1">Part of the 30S ribosomal subunit. Contacts proteins S3 and S10.</text>
</comment>
<comment type="similarity">
    <text evidence="1">Belongs to the universal ribosomal protein uS14 family. Zinc-binding uS14 subfamily.</text>
</comment>
<name>RS14Z_MYCSS</name>
<gene>
    <name evidence="1" type="primary">rpsZ</name>
    <name evidence="1" type="synonym">rpsN</name>
    <name type="ordered locus">Mmcs_1028</name>
</gene>
<accession>Q1BD92</accession>
<feature type="chain" id="PRO_0000269117" description="Small ribosomal subunit protein uS14">
    <location>
        <begin position="1"/>
        <end position="61"/>
    </location>
</feature>
<feature type="binding site" evidence="1">
    <location>
        <position position="24"/>
    </location>
    <ligand>
        <name>Zn(2+)</name>
        <dbReference type="ChEBI" id="CHEBI:29105"/>
    </ligand>
</feature>
<feature type="binding site" evidence="1">
    <location>
        <position position="27"/>
    </location>
    <ligand>
        <name>Zn(2+)</name>
        <dbReference type="ChEBI" id="CHEBI:29105"/>
    </ligand>
</feature>
<feature type="binding site" evidence="1">
    <location>
        <position position="40"/>
    </location>
    <ligand>
        <name>Zn(2+)</name>
        <dbReference type="ChEBI" id="CHEBI:29105"/>
    </ligand>
</feature>
<feature type="binding site" evidence="1">
    <location>
        <position position="43"/>
    </location>
    <ligand>
        <name>Zn(2+)</name>
        <dbReference type="ChEBI" id="CHEBI:29105"/>
    </ligand>
</feature>
<reference key="1">
    <citation type="submission" date="2006-06" db="EMBL/GenBank/DDBJ databases">
        <title>Complete sequence of chromosome of Mycobacterium sp. MCS.</title>
        <authorList>
            <consortium name="US DOE Joint Genome Institute"/>
            <person name="Copeland A."/>
            <person name="Lucas S."/>
            <person name="Lapidus A."/>
            <person name="Barry K."/>
            <person name="Detter J.C."/>
            <person name="Glavina del Rio T."/>
            <person name="Hammon N."/>
            <person name="Israni S."/>
            <person name="Dalin E."/>
            <person name="Tice H."/>
            <person name="Pitluck S."/>
            <person name="Martinez M."/>
            <person name="Schmutz J."/>
            <person name="Larimer F."/>
            <person name="Land M."/>
            <person name="Hauser L."/>
            <person name="Kyrpides N."/>
            <person name="Kim E."/>
            <person name="Miller C.D."/>
            <person name="Hughes J.E."/>
            <person name="Anderson A.J."/>
            <person name="Sims R.C."/>
            <person name="Richardson P."/>
        </authorList>
    </citation>
    <scope>NUCLEOTIDE SEQUENCE [LARGE SCALE GENOMIC DNA]</scope>
    <source>
        <strain>MCS</strain>
    </source>
</reference>
<sequence>MAKKALVNKANKKPKFKVRGYTRCQRCGRPHAVFRKFGLCRICLREMAHAGELPGVQKSSW</sequence>
<proteinExistence type="inferred from homology"/>